<accession>Q8ZHK4</accession>
<accession>Q0WIF1</accession>
<sequence>MFEINPVKNRIQDLSDRTAVLRGYLCDYDAKKERLEEVNAELEQPDVWNEPERAQALGKERSTLEEIVTTIDQLEQGLEDVSGLLELAVEADDEETFNETIAELEVLDGKLGQLEFRRMFSGEYDRANCYLDLQAGSGGTEAQDWASMLLRMYLRWAESRGFKTEIIEESDGDVAGLKSATVKIIGEYAFGWLRTETGVHRLVRKSPFDSGGRRHTSFSSAFVYPEVDDDIDIEINPADLRIDVYRASGAGGQHVNKTESAVRITHIPTNIVTQCQNDRSQHKNKDQAMKQLKAKLYEFEMQKKNADKQVLEDNKSDIGWGSQIRSYVLDDSRIKDLRTGVETRNTQAVLDGDLDKFIEASLKAGL</sequence>
<keyword id="KW-0963">Cytoplasm</keyword>
<keyword id="KW-0488">Methylation</keyword>
<keyword id="KW-0648">Protein biosynthesis</keyword>
<keyword id="KW-1185">Reference proteome</keyword>
<keyword id="KW-0688">Ribosomal frameshifting</keyword>
<reference key="1">
    <citation type="journal article" date="2001" name="Nature">
        <title>Genome sequence of Yersinia pestis, the causative agent of plague.</title>
        <authorList>
            <person name="Parkhill J."/>
            <person name="Wren B.W."/>
            <person name="Thomson N.R."/>
            <person name="Titball R.W."/>
            <person name="Holden M.T.G."/>
            <person name="Prentice M.B."/>
            <person name="Sebaihia M."/>
            <person name="James K.D."/>
            <person name="Churcher C.M."/>
            <person name="Mungall K.L."/>
            <person name="Baker S."/>
            <person name="Basham D."/>
            <person name="Bentley S.D."/>
            <person name="Brooks K."/>
            <person name="Cerdeno-Tarraga A.-M."/>
            <person name="Chillingworth T."/>
            <person name="Cronin A."/>
            <person name="Davies R.M."/>
            <person name="Davis P."/>
            <person name="Dougan G."/>
            <person name="Feltwell T."/>
            <person name="Hamlin N."/>
            <person name="Holroyd S."/>
            <person name="Jagels K."/>
            <person name="Karlyshev A.V."/>
            <person name="Leather S."/>
            <person name="Moule S."/>
            <person name="Oyston P.C.F."/>
            <person name="Quail M.A."/>
            <person name="Rutherford K.M."/>
            <person name="Simmonds M."/>
            <person name="Skelton J."/>
            <person name="Stevens K."/>
            <person name="Whitehead S."/>
            <person name="Barrell B.G."/>
        </authorList>
    </citation>
    <scope>NUCLEOTIDE SEQUENCE [LARGE SCALE GENOMIC DNA]</scope>
    <source>
        <strain>CO-92 / Biovar Orientalis</strain>
    </source>
</reference>
<reference key="2">
    <citation type="journal article" date="2002" name="J. Bacteriol.">
        <title>Genome sequence of Yersinia pestis KIM.</title>
        <authorList>
            <person name="Deng W."/>
            <person name="Burland V."/>
            <person name="Plunkett G. III"/>
            <person name="Boutin A."/>
            <person name="Mayhew G.F."/>
            <person name="Liss P."/>
            <person name="Perna N.T."/>
            <person name="Rose D.J."/>
            <person name="Mau B."/>
            <person name="Zhou S."/>
            <person name="Schwartz D.C."/>
            <person name="Fetherston J.D."/>
            <person name="Lindler L.E."/>
            <person name="Brubaker R.R."/>
            <person name="Plano G.V."/>
            <person name="Straley S.C."/>
            <person name="McDonough K.A."/>
            <person name="Nilles M.L."/>
            <person name="Matson J.S."/>
            <person name="Blattner F.R."/>
            <person name="Perry R.D."/>
        </authorList>
    </citation>
    <scope>NUCLEOTIDE SEQUENCE [LARGE SCALE GENOMIC DNA]</scope>
    <source>
        <strain>KIM10+ / Biovar Mediaevalis</strain>
    </source>
</reference>
<reference key="3">
    <citation type="journal article" date="2004" name="DNA Res.">
        <title>Complete genome sequence of Yersinia pestis strain 91001, an isolate avirulent to humans.</title>
        <authorList>
            <person name="Song Y."/>
            <person name="Tong Z."/>
            <person name="Wang J."/>
            <person name="Wang L."/>
            <person name="Guo Z."/>
            <person name="Han Y."/>
            <person name="Zhang J."/>
            <person name="Pei D."/>
            <person name="Zhou D."/>
            <person name="Qin H."/>
            <person name="Pang X."/>
            <person name="Han Y."/>
            <person name="Zhai J."/>
            <person name="Li M."/>
            <person name="Cui B."/>
            <person name="Qi Z."/>
            <person name="Jin L."/>
            <person name="Dai R."/>
            <person name="Chen F."/>
            <person name="Li S."/>
            <person name="Ye C."/>
            <person name="Du Z."/>
            <person name="Lin W."/>
            <person name="Wang J."/>
            <person name="Yu J."/>
            <person name="Yang H."/>
            <person name="Wang J."/>
            <person name="Huang P."/>
            <person name="Yang R."/>
        </authorList>
    </citation>
    <scope>NUCLEOTIDE SEQUENCE [LARGE SCALE GENOMIC DNA]</scope>
    <source>
        <strain>91001 / Biovar Mediaevalis</strain>
    </source>
</reference>
<gene>
    <name evidence="2" type="primary">prfB</name>
    <name type="ordered locus">YPO0889</name>
    <name type="ordered locus">y3273</name>
    <name type="ordered locus">YP_3585</name>
</gene>
<dbReference type="EMBL" id="AL590842">
    <property type="protein sequence ID" value="CAL19556.1"/>
    <property type="molecule type" value="Genomic_DNA"/>
</dbReference>
<dbReference type="EMBL" id="AE009952">
    <property type="protein sequence ID" value="AAM86823.1"/>
    <property type="molecule type" value="Genomic_DNA"/>
</dbReference>
<dbReference type="EMBL" id="AE017042">
    <property type="protein sequence ID" value="AAS63736.1"/>
    <property type="status" value="ALT_SEQ"/>
    <property type="molecule type" value="Genomic_DNA"/>
</dbReference>
<dbReference type="PIR" id="AB0109">
    <property type="entry name" value="AB0109"/>
</dbReference>
<dbReference type="SMR" id="Q8ZHK4"/>
<dbReference type="IntAct" id="Q8ZHK4">
    <property type="interactions" value="2"/>
</dbReference>
<dbReference type="STRING" id="214092.YPO0889"/>
<dbReference type="PaxDb" id="214092-YPO0889"/>
<dbReference type="EnsemblBacteria" id="AAS63736">
    <property type="protein sequence ID" value="AAS63736"/>
    <property type="gene ID" value="YP_3585"/>
</dbReference>
<dbReference type="KEGG" id="ype:YPO0889"/>
<dbReference type="KEGG" id="ypk:y3273"/>
<dbReference type="KEGG" id="ypm:YP_3585"/>
<dbReference type="eggNOG" id="COG1186">
    <property type="taxonomic scope" value="Bacteria"/>
</dbReference>
<dbReference type="HOGENOM" id="CLU_036856_6_1_6"/>
<dbReference type="Proteomes" id="UP000000815">
    <property type="component" value="Chromosome"/>
</dbReference>
<dbReference type="Proteomes" id="UP000001019">
    <property type="component" value="Chromosome"/>
</dbReference>
<dbReference type="Proteomes" id="UP000002490">
    <property type="component" value="Chromosome"/>
</dbReference>
<dbReference type="GO" id="GO:0005737">
    <property type="term" value="C:cytoplasm"/>
    <property type="evidence" value="ECO:0007669"/>
    <property type="project" value="UniProtKB-SubCell"/>
</dbReference>
<dbReference type="GO" id="GO:0016149">
    <property type="term" value="F:translation release factor activity, codon specific"/>
    <property type="evidence" value="ECO:0007669"/>
    <property type="project" value="UniProtKB-UniRule"/>
</dbReference>
<dbReference type="GO" id="GO:0075523">
    <property type="term" value="P:viral translational frameshifting"/>
    <property type="evidence" value="ECO:0007669"/>
    <property type="project" value="UniProtKB-KW"/>
</dbReference>
<dbReference type="FunFam" id="3.30.160.20:FF:000010">
    <property type="entry name" value="Peptide chain release factor 2"/>
    <property type="match status" value="1"/>
</dbReference>
<dbReference type="Gene3D" id="3.30.160.20">
    <property type="match status" value="1"/>
</dbReference>
<dbReference type="Gene3D" id="3.30.70.1660">
    <property type="match status" value="1"/>
</dbReference>
<dbReference type="Gene3D" id="1.20.58.410">
    <property type="entry name" value="Release factor"/>
    <property type="match status" value="1"/>
</dbReference>
<dbReference type="HAMAP" id="MF_00094">
    <property type="entry name" value="Rel_fac_2"/>
    <property type="match status" value="1"/>
</dbReference>
<dbReference type="InterPro" id="IPR005139">
    <property type="entry name" value="PCRF"/>
</dbReference>
<dbReference type="InterPro" id="IPR000352">
    <property type="entry name" value="Pep_chain_release_fac_I"/>
</dbReference>
<dbReference type="InterPro" id="IPR045853">
    <property type="entry name" value="Pep_chain_release_fac_I_sf"/>
</dbReference>
<dbReference type="InterPro" id="IPR004374">
    <property type="entry name" value="PrfB"/>
</dbReference>
<dbReference type="NCBIfam" id="TIGR00020">
    <property type="entry name" value="prfB"/>
    <property type="match status" value="1"/>
</dbReference>
<dbReference type="PANTHER" id="PTHR43116:SF3">
    <property type="entry name" value="CLASS I PEPTIDE CHAIN RELEASE FACTOR"/>
    <property type="match status" value="1"/>
</dbReference>
<dbReference type="PANTHER" id="PTHR43116">
    <property type="entry name" value="PEPTIDE CHAIN RELEASE FACTOR 2"/>
    <property type="match status" value="1"/>
</dbReference>
<dbReference type="Pfam" id="PF03462">
    <property type="entry name" value="PCRF"/>
    <property type="match status" value="1"/>
</dbReference>
<dbReference type="Pfam" id="PF00472">
    <property type="entry name" value="RF-1"/>
    <property type="match status" value="1"/>
</dbReference>
<dbReference type="SMART" id="SM00937">
    <property type="entry name" value="PCRF"/>
    <property type="match status" value="1"/>
</dbReference>
<dbReference type="SUPFAM" id="SSF75620">
    <property type="entry name" value="Release factor"/>
    <property type="match status" value="1"/>
</dbReference>
<dbReference type="PROSITE" id="PS00745">
    <property type="entry name" value="RF_PROK_I"/>
    <property type="match status" value="1"/>
</dbReference>
<feature type="chain" id="PRO_0000166856" description="Peptide chain release factor 2">
    <location>
        <begin position="1"/>
        <end position="366"/>
    </location>
</feature>
<feature type="modified residue" description="N5-methylglutamine" evidence="2">
    <location>
        <position position="253"/>
    </location>
</feature>
<comment type="function">
    <text evidence="2">Peptide chain release factor 2 directs the termination of translation in response to the peptide chain termination codons UGA and UAA.</text>
</comment>
<comment type="subcellular location">
    <subcellularLocation>
        <location evidence="2">Cytoplasm</location>
    </subcellularLocation>
</comment>
<comment type="PTM">
    <text evidence="2">Methylated by PrmC. Methylation increases the termination efficiency of RF2.</text>
</comment>
<comment type="miscellaneous">
    <text evidence="1">The gene for this protein contains a UGA in-frame termination codon after Leu-25; a naturally occurring frameshift enables complete translation of RF-2. This provides a mechanism for the protein to regulate its own production (By similarity).</text>
</comment>
<comment type="similarity">
    <text evidence="2">Belongs to the prokaryotic/mitochondrial release factor family.</text>
</comment>
<proteinExistence type="inferred from homology"/>
<evidence type="ECO:0000250" key="1"/>
<evidence type="ECO:0000255" key="2">
    <source>
        <dbReference type="HAMAP-Rule" id="MF_00094"/>
    </source>
</evidence>
<name>RF2_YERPE</name>
<protein>
    <recommendedName>
        <fullName evidence="2">Peptide chain release factor 2</fullName>
        <shortName evidence="2">RF-2</shortName>
    </recommendedName>
</protein>
<organism>
    <name type="scientific">Yersinia pestis</name>
    <dbReference type="NCBI Taxonomy" id="632"/>
    <lineage>
        <taxon>Bacteria</taxon>
        <taxon>Pseudomonadati</taxon>
        <taxon>Pseudomonadota</taxon>
        <taxon>Gammaproteobacteria</taxon>
        <taxon>Enterobacterales</taxon>
        <taxon>Yersiniaceae</taxon>
        <taxon>Yersinia</taxon>
    </lineage>
</organism>